<reference key="1">
    <citation type="submission" date="2006-12" db="EMBL/GenBank/DDBJ databases">
        <title>Complete sequence of Chlorobium phaeobacteroides DSM 266.</title>
        <authorList>
            <consortium name="US DOE Joint Genome Institute"/>
            <person name="Copeland A."/>
            <person name="Lucas S."/>
            <person name="Lapidus A."/>
            <person name="Barry K."/>
            <person name="Detter J.C."/>
            <person name="Glavina del Rio T."/>
            <person name="Hammon N."/>
            <person name="Israni S."/>
            <person name="Pitluck S."/>
            <person name="Goltsman E."/>
            <person name="Schmutz J."/>
            <person name="Larimer F."/>
            <person name="Land M."/>
            <person name="Hauser L."/>
            <person name="Mikhailova N."/>
            <person name="Li T."/>
            <person name="Overmann J."/>
            <person name="Bryant D.A."/>
            <person name="Richardson P."/>
        </authorList>
    </citation>
    <scope>NUCLEOTIDE SEQUENCE [LARGE SCALE GENOMIC DNA]</scope>
    <source>
        <strain>DSM 266 / SMG 266 / 2430</strain>
    </source>
</reference>
<comment type="function">
    <text evidence="1">Catalyzes the methylthiolation of N6-(dimethylallyl)adenosine (i(6)A), leading to the formation of 2-methylthio-N6-(dimethylallyl)adenosine (ms(2)i(6)A) at position 37 in tRNAs that read codons beginning with uridine.</text>
</comment>
<comment type="catalytic activity">
    <reaction evidence="1">
        <text>N(6)-dimethylallyladenosine(37) in tRNA + (sulfur carrier)-SH + AH2 + 2 S-adenosyl-L-methionine = 2-methylsulfanyl-N(6)-dimethylallyladenosine(37) in tRNA + (sulfur carrier)-H + 5'-deoxyadenosine + L-methionine + A + S-adenosyl-L-homocysteine + 2 H(+)</text>
        <dbReference type="Rhea" id="RHEA:37067"/>
        <dbReference type="Rhea" id="RHEA-COMP:10375"/>
        <dbReference type="Rhea" id="RHEA-COMP:10376"/>
        <dbReference type="Rhea" id="RHEA-COMP:14737"/>
        <dbReference type="Rhea" id="RHEA-COMP:14739"/>
        <dbReference type="ChEBI" id="CHEBI:13193"/>
        <dbReference type="ChEBI" id="CHEBI:15378"/>
        <dbReference type="ChEBI" id="CHEBI:17319"/>
        <dbReference type="ChEBI" id="CHEBI:17499"/>
        <dbReference type="ChEBI" id="CHEBI:29917"/>
        <dbReference type="ChEBI" id="CHEBI:57844"/>
        <dbReference type="ChEBI" id="CHEBI:57856"/>
        <dbReference type="ChEBI" id="CHEBI:59789"/>
        <dbReference type="ChEBI" id="CHEBI:64428"/>
        <dbReference type="ChEBI" id="CHEBI:74415"/>
        <dbReference type="ChEBI" id="CHEBI:74417"/>
        <dbReference type="EC" id="2.8.4.3"/>
    </reaction>
</comment>
<comment type="cofactor">
    <cofactor evidence="1">
        <name>[4Fe-4S] cluster</name>
        <dbReference type="ChEBI" id="CHEBI:49883"/>
    </cofactor>
    <text evidence="1">Binds 2 [4Fe-4S] clusters. One cluster is coordinated with 3 cysteines and an exchangeable S-adenosyl-L-methionine.</text>
</comment>
<comment type="subunit">
    <text evidence="1">Monomer.</text>
</comment>
<comment type="subcellular location">
    <subcellularLocation>
        <location evidence="1">Cytoplasm</location>
    </subcellularLocation>
</comment>
<comment type="similarity">
    <text evidence="1">Belongs to the methylthiotransferase family. MiaB subfamily.</text>
</comment>
<evidence type="ECO:0000255" key="1">
    <source>
        <dbReference type="HAMAP-Rule" id="MF_01864"/>
    </source>
</evidence>
<evidence type="ECO:0000255" key="2">
    <source>
        <dbReference type="PROSITE-ProRule" id="PRU01266"/>
    </source>
</evidence>
<gene>
    <name evidence="1" type="primary">miaB</name>
    <name type="ordered locus">Cpha266_2361</name>
</gene>
<organism>
    <name type="scientific">Chlorobium phaeobacteroides (strain DSM 266 / SMG 266 / 2430)</name>
    <dbReference type="NCBI Taxonomy" id="290317"/>
    <lineage>
        <taxon>Bacteria</taxon>
        <taxon>Pseudomonadati</taxon>
        <taxon>Chlorobiota</taxon>
        <taxon>Chlorobiia</taxon>
        <taxon>Chlorobiales</taxon>
        <taxon>Chlorobiaceae</taxon>
        <taxon>Chlorobium/Pelodictyon group</taxon>
        <taxon>Chlorobium</taxon>
    </lineage>
</organism>
<keyword id="KW-0004">4Fe-4S</keyword>
<keyword id="KW-0963">Cytoplasm</keyword>
<keyword id="KW-0408">Iron</keyword>
<keyword id="KW-0411">Iron-sulfur</keyword>
<keyword id="KW-0479">Metal-binding</keyword>
<keyword id="KW-1185">Reference proteome</keyword>
<keyword id="KW-0949">S-adenosyl-L-methionine</keyword>
<keyword id="KW-0808">Transferase</keyword>
<keyword id="KW-0819">tRNA processing</keyword>
<dbReference type="EC" id="2.8.4.3" evidence="1"/>
<dbReference type="EMBL" id="CP000492">
    <property type="protein sequence ID" value="ABL66349.1"/>
    <property type="molecule type" value="Genomic_DNA"/>
</dbReference>
<dbReference type="RefSeq" id="WP_011746134.1">
    <property type="nucleotide sequence ID" value="NC_008639.1"/>
</dbReference>
<dbReference type="SMR" id="A1BIX2"/>
<dbReference type="STRING" id="290317.Cpha266_2361"/>
<dbReference type="KEGG" id="cph:Cpha266_2361"/>
<dbReference type="eggNOG" id="COG0621">
    <property type="taxonomic scope" value="Bacteria"/>
</dbReference>
<dbReference type="HOGENOM" id="CLU_018697_2_0_10"/>
<dbReference type="OrthoDB" id="9805215at2"/>
<dbReference type="Proteomes" id="UP000008701">
    <property type="component" value="Chromosome"/>
</dbReference>
<dbReference type="GO" id="GO:0005829">
    <property type="term" value="C:cytosol"/>
    <property type="evidence" value="ECO:0007669"/>
    <property type="project" value="TreeGrafter"/>
</dbReference>
<dbReference type="GO" id="GO:0051539">
    <property type="term" value="F:4 iron, 4 sulfur cluster binding"/>
    <property type="evidence" value="ECO:0007669"/>
    <property type="project" value="UniProtKB-UniRule"/>
</dbReference>
<dbReference type="GO" id="GO:0046872">
    <property type="term" value="F:metal ion binding"/>
    <property type="evidence" value="ECO:0007669"/>
    <property type="project" value="UniProtKB-KW"/>
</dbReference>
<dbReference type="GO" id="GO:0035597">
    <property type="term" value="F:N6-isopentenyladenosine methylthiotransferase activity"/>
    <property type="evidence" value="ECO:0007669"/>
    <property type="project" value="TreeGrafter"/>
</dbReference>
<dbReference type="CDD" id="cd01335">
    <property type="entry name" value="Radical_SAM"/>
    <property type="match status" value="1"/>
</dbReference>
<dbReference type="FunFam" id="3.40.50.12160:FF:000003">
    <property type="entry name" value="CDK5 regulatory subunit-associated protein 1"/>
    <property type="match status" value="1"/>
</dbReference>
<dbReference type="FunFam" id="3.80.30.20:FF:000001">
    <property type="entry name" value="tRNA-2-methylthio-N(6)-dimethylallyladenosine synthase 2"/>
    <property type="match status" value="1"/>
</dbReference>
<dbReference type="Gene3D" id="3.40.50.12160">
    <property type="entry name" value="Methylthiotransferase, N-terminal domain"/>
    <property type="match status" value="1"/>
</dbReference>
<dbReference type="Gene3D" id="3.80.30.20">
    <property type="entry name" value="tm_1862 like domain"/>
    <property type="match status" value="1"/>
</dbReference>
<dbReference type="HAMAP" id="MF_01864">
    <property type="entry name" value="tRNA_metthiotr_MiaB"/>
    <property type="match status" value="1"/>
</dbReference>
<dbReference type="InterPro" id="IPR006638">
    <property type="entry name" value="Elp3/MiaA/NifB-like_rSAM"/>
</dbReference>
<dbReference type="InterPro" id="IPR005839">
    <property type="entry name" value="Methylthiotransferase"/>
</dbReference>
<dbReference type="InterPro" id="IPR020612">
    <property type="entry name" value="Methylthiotransferase_CS"/>
</dbReference>
<dbReference type="InterPro" id="IPR013848">
    <property type="entry name" value="Methylthiotransferase_N"/>
</dbReference>
<dbReference type="InterPro" id="IPR038135">
    <property type="entry name" value="Methylthiotransferase_N_sf"/>
</dbReference>
<dbReference type="InterPro" id="IPR006463">
    <property type="entry name" value="MiaB_methiolase"/>
</dbReference>
<dbReference type="InterPro" id="IPR007197">
    <property type="entry name" value="rSAM"/>
</dbReference>
<dbReference type="InterPro" id="IPR023404">
    <property type="entry name" value="rSAM_horseshoe"/>
</dbReference>
<dbReference type="InterPro" id="IPR002792">
    <property type="entry name" value="TRAM_dom"/>
</dbReference>
<dbReference type="NCBIfam" id="TIGR01574">
    <property type="entry name" value="miaB-methiolase"/>
    <property type="match status" value="1"/>
</dbReference>
<dbReference type="NCBIfam" id="TIGR00089">
    <property type="entry name" value="MiaB/RimO family radical SAM methylthiotransferase"/>
    <property type="match status" value="1"/>
</dbReference>
<dbReference type="PANTHER" id="PTHR43020">
    <property type="entry name" value="CDK5 REGULATORY SUBUNIT-ASSOCIATED PROTEIN 1"/>
    <property type="match status" value="1"/>
</dbReference>
<dbReference type="PANTHER" id="PTHR43020:SF2">
    <property type="entry name" value="MITOCHONDRIAL TRNA METHYLTHIOTRANSFERASE CDK5RAP1"/>
    <property type="match status" value="1"/>
</dbReference>
<dbReference type="Pfam" id="PF04055">
    <property type="entry name" value="Radical_SAM"/>
    <property type="match status" value="1"/>
</dbReference>
<dbReference type="Pfam" id="PF01938">
    <property type="entry name" value="TRAM"/>
    <property type="match status" value="1"/>
</dbReference>
<dbReference type="Pfam" id="PF00919">
    <property type="entry name" value="UPF0004"/>
    <property type="match status" value="1"/>
</dbReference>
<dbReference type="SFLD" id="SFLDF00273">
    <property type="entry name" value="(dimethylallyl)adenosine_tRNA"/>
    <property type="match status" value="1"/>
</dbReference>
<dbReference type="SFLD" id="SFLDG01082">
    <property type="entry name" value="B12-binding_domain_containing"/>
    <property type="match status" value="1"/>
</dbReference>
<dbReference type="SFLD" id="SFLDF00413">
    <property type="entry name" value="CDK5RAP1"/>
    <property type="match status" value="1"/>
</dbReference>
<dbReference type="SFLD" id="SFLDS00029">
    <property type="entry name" value="Radical_SAM"/>
    <property type="match status" value="1"/>
</dbReference>
<dbReference type="SMART" id="SM00729">
    <property type="entry name" value="Elp3"/>
    <property type="match status" value="1"/>
</dbReference>
<dbReference type="SUPFAM" id="SSF102114">
    <property type="entry name" value="Radical SAM enzymes"/>
    <property type="match status" value="1"/>
</dbReference>
<dbReference type="PROSITE" id="PS51449">
    <property type="entry name" value="MTTASE_N"/>
    <property type="match status" value="1"/>
</dbReference>
<dbReference type="PROSITE" id="PS01278">
    <property type="entry name" value="MTTASE_RADICAL"/>
    <property type="match status" value="1"/>
</dbReference>
<dbReference type="PROSITE" id="PS51918">
    <property type="entry name" value="RADICAL_SAM"/>
    <property type="match status" value="1"/>
</dbReference>
<dbReference type="PROSITE" id="PS50926">
    <property type="entry name" value="TRAM"/>
    <property type="match status" value="1"/>
</dbReference>
<name>MIAB_CHLPD</name>
<protein>
    <recommendedName>
        <fullName evidence="1">tRNA-2-methylthio-N(6)-dimethylallyladenosine synthase</fullName>
        <ecNumber evidence="1">2.8.4.3</ecNumber>
    </recommendedName>
    <alternativeName>
        <fullName evidence="1">(Dimethylallyl)adenosine tRNA methylthiotransferase MiaB</fullName>
    </alternativeName>
    <alternativeName>
        <fullName evidence="1">tRNA-i(6)A37 methylthiotransferase</fullName>
    </alternativeName>
</protein>
<accession>A1BIX2</accession>
<sequence length="442" mass="49588">MPRARRKFYIHTFGCQMNQADSGIITALLEKEGYQQAASEEEAGIIMLNTCAVRENAVERISHYLQHVKGFKRKCPELIVGLTGCIPQYRREELFTVFPVIDFLAGPDTYRVLPALIAEAGDSRSARLEFNAFETYDGVRQARTQSLNAFVPIIRGCNNMCAFCVVPFTRGRERSHPFESVLDEVRALADDGCREITLLGQNVNSYHDPASGADFSRLLDAVSREAPETRIRFTTSHPKDMSHSLVETMALRPNICNHLHLPVQSGSTRMLARMNRGHDIEEYRNKIELLRKWIPGISLSTDLIAGFCGESEADHDQTLELMREVRFDSVFMFYYSVRQGTLAARTMPDDVPEEVKKQRLQEIIDLQNGISAELLGLAPGSVVEVLVESESRRSSDQLMGRTDGNRVVVFDRGIHQPGDLVRVMITGSTSATLFGQSAENLQ</sequence>
<proteinExistence type="inferred from homology"/>
<feature type="chain" id="PRO_0000374210" description="tRNA-2-methylthio-N(6)-dimethylallyladenosine synthase">
    <location>
        <begin position="1"/>
        <end position="442"/>
    </location>
</feature>
<feature type="domain" description="MTTase N-terminal" evidence="1">
    <location>
        <begin position="6"/>
        <end position="122"/>
    </location>
</feature>
<feature type="domain" description="Radical SAM core" evidence="2">
    <location>
        <begin position="143"/>
        <end position="373"/>
    </location>
</feature>
<feature type="domain" description="TRAM" evidence="1">
    <location>
        <begin position="376"/>
        <end position="439"/>
    </location>
</feature>
<feature type="binding site" evidence="1">
    <location>
        <position position="15"/>
    </location>
    <ligand>
        <name>[4Fe-4S] cluster</name>
        <dbReference type="ChEBI" id="CHEBI:49883"/>
        <label>1</label>
    </ligand>
</feature>
<feature type="binding site" evidence="1">
    <location>
        <position position="51"/>
    </location>
    <ligand>
        <name>[4Fe-4S] cluster</name>
        <dbReference type="ChEBI" id="CHEBI:49883"/>
        <label>1</label>
    </ligand>
</feature>
<feature type="binding site" evidence="1">
    <location>
        <position position="85"/>
    </location>
    <ligand>
        <name>[4Fe-4S] cluster</name>
        <dbReference type="ChEBI" id="CHEBI:49883"/>
        <label>1</label>
    </ligand>
</feature>
<feature type="binding site" evidence="1">
    <location>
        <position position="157"/>
    </location>
    <ligand>
        <name>[4Fe-4S] cluster</name>
        <dbReference type="ChEBI" id="CHEBI:49883"/>
        <label>2</label>
        <note>4Fe-4S-S-AdoMet</note>
    </ligand>
</feature>
<feature type="binding site" evidence="1">
    <location>
        <position position="161"/>
    </location>
    <ligand>
        <name>[4Fe-4S] cluster</name>
        <dbReference type="ChEBI" id="CHEBI:49883"/>
        <label>2</label>
        <note>4Fe-4S-S-AdoMet</note>
    </ligand>
</feature>
<feature type="binding site" evidence="1">
    <location>
        <position position="164"/>
    </location>
    <ligand>
        <name>[4Fe-4S] cluster</name>
        <dbReference type="ChEBI" id="CHEBI:49883"/>
        <label>2</label>
        <note>4Fe-4S-S-AdoMet</note>
    </ligand>
</feature>